<organism>
    <name type="scientific">Echis multisquamatus</name>
    <name type="common">Central Asian sand viper</name>
    <dbReference type="NCBI Taxonomy" id="93050"/>
    <lineage>
        <taxon>Eukaryota</taxon>
        <taxon>Metazoa</taxon>
        <taxon>Chordata</taxon>
        <taxon>Craniata</taxon>
        <taxon>Vertebrata</taxon>
        <taxon>Euteleostomi</taxon>
        <taxon>Lepidosauria</taxon>
        <taxon>Squamata</taxon>
        <taxon>Bifurcata</taxon>
        <taxon>Unidentata</taxon>
        <taxon>Episquamata</taxon>
        <taxon>Toxicofera</taxon>
        <taxon>Serpentes</taxon>
        <taxon>Colubroidea</taxon>
        <taxon>Viperidae</taxon>
        <taxon>Viperinae</taxon>
        <taxon>Echis</taxon>
    </lineage>
</organism>
<keyword id="KW-1217">Cell adhesion impairing toxin</keyword>
<keyword id="KW-0903">Direct protein sequencing</keyword>
<keyword id="KW-1015">Disulfide bond</keyword>
<keyword id="KW-1199">Hemostasis impairing toxin</keyword>
<keyword id="KW-1201">Platelet aggregation inhibiting toxin</keyword>
<keyword id="KW-0964">Secreted</keyword>
<keyword id="KW-0800">Toxin</keyword>
<protein>
    <recommendedName>
        <fullName>Disintegrin multisquamatin</fullName>
    </recommendedName>
</protein>
<dbReference type="BMRB" id="P0C6R5"/>
<dbReference type="SMR" id="P0C6R5"/>
<dbReference type="GO" id="GO:0005576">
    <property type="term" value="C:extracellular region"/>
    <property type="evidence" value="ECO:0007669"/>
    <property type="project" value="UniProtKB-SubCell"/>
</dbReference>
<dbReference type="GO" id="GO:0090729">
    <property type="term" value="F:toxin activity"/>
    <property type="evidence" value="ECO:0007669"/>
    <property type="project" value="UniProtKB-KW"/>
</dbReference>
<dbReference type="Gene3D" id="4.10.70.10">
    <property type="entry name" value="Disintegrin domain"/>
    <property type="match status" value="1"/>
</dbReference>
<dbReference type="InterPro" id="IPR018358">
    <property type="entry name" value="Disintegrin_CS"/>
</dbReference>
<dbReference type="InterPro" id="IPR001762">
    <property type="entry name" value="Disintegrin_dom"/>
</dbReference>
<dbReference type="InterPro" id="IPR036436">
    <property type="entry name" value="Disintegrin_dom_sf"/>
</dbReference>
<dbReference type="PRINTS" id="PR00289">
    <property type="entry name" value="DISINTEGRIN"/>
</dbReference>
<dbReference type="SMART" id="SM00050">
    <property type="entry name" value="DISIN"/>
    <property type="match status" value="1"/>
</dbReference>
<dbReference type="SUPFAM" id="SSF57552">
    <property type="entry name" value="Blood coagulation inhibitor (disintegrin)"/>
    <property type="match status" value="1"/>
</dbReference>
<dbReference type="PROSITE" id="PS00427">
    <property type="entry name" value="DISINTEGRIN_1"/>
    <property type="match status" value="1"/>
</dbReference>
<dbReference type="PROSITE" id="PS50214">
    <property type="entry name" value="DISINTEGRIN_2"/>
    <property type="match status" value="1"/>
</dbReference>
<sequence length="52" mass="5740">EGEECESGPCCRNCKFLKEGTICKRARGDDMDDYCNGKTCDCPRNPHKGPAT</sequence>
<accession>P0C6R5</accession>
<proteinExistence type="evidence at protein level"/>
<reference key="1">
    <citation type="journal article" date="2001" name="J. Biochem.">
        <title>Comparative biochemistry of disintegrins isolated from snake venom: consideration of the taxonomy and geographical distribution of snakes in the genus Echis.</title>
        <authorList>
            <person name="Okuda D."/>
            <person name="Nozaki C."/>
            <person name="Sekiya F."/>
            <person name="Morita T."/>
        </authorList>
    </citation>
    <scope>PROTEIN SEQUENCE</scope>
    <scope>FUNCTION</scope>
    <source>
        <tissue>Venom</tissue>
    </source>
</reference>
<reference key="2">
    <citation type="journal article" date="1994" name="Thromb. Res.">
        <title>Purification and characterization of platelet aggregation inhibitors from snake venoms.</title>
        <authorList>
            <person name="Trikha M."/>
            <person name="Rote W.E."/>
            <person name="Manley P.J."/>
            <person name="Lucchesi B.R."/>
            <person name="Markland F.S."/>
        </authorList>
    </citation>
    <scope>FUNCTION</scope>
    <source>
        <tissue>Venom</tissue>
    </source>
</reference>
<name>VM2MU_ECHML</name>
<comment type="function">
    <text evidence="3 4">Inhibits ADP-induced human, canine and rabbit platelet aggregation by binding with high affinity to alpha-IIb/beta-3 (ITGA2B/ITGB3).</text>
</comment>
<comment type="subunit">
    <text evidence="1">Monomer.</text>
</comment>
<comment type="subcellular location">
    <subcellularLocation>
        <location>Secreted</location>
    </subcellularLocation>
</comment>
<comment type="tissue specificity">
    <text>Expressed by the venom gland.</text>
</comment>
<comment type="miscellaneous">
    <text>The disintegrin belongs to the short disintegrin subfamily.</text>
</comment>
<comment type="similarity">
    <text evidence="5">Belongs to the venom metalloproteinase (M12B) family. P-II subfamily. P-IIa sub-subfamily.</text>
</comment>
<evidence type="ECO:0000250" key="1"/>
<evidence type="ECO:0000255" key="2">
    <source>
        <dbReference type="PROSITE-ProRule" id="PRU00068"/>
    </source>
</evidence>
<evidence type="ECO:0000269" key="3">
    <source>
    </source>
</evidence>
<evidence type="ECO:0000269" key="4">
    <source>
    </source>
</evidence>
<evidence type="ECO:0000305" key="5"/>
<feature type="chain" id="PRO_0000326265" description="Disintegrin multisquamatin">
    <location>
        <begin position="1"/>
        <end position="52"/>
    </location>
</feature>
<feature type="domain" description="Disintegrin" evidence="2">
    <location>
        <begin position="1"/>
        <end position="50"/>
    </location>
</feature>
<feature type="short sequence motif" description="Cell attachment site">
    <location>
        <begin position="27"/>
        <end position="29"/>
    </location>
</feature>
<feature type="disulfide bond" evidence="2">
    <location>
        <begin position="5"/>
        <end position="14"/>
    </location>
</feature>
<feature type="disulfide bond" evidence="2">
    <location>
        <begin position="10"/>
        <end position="35"/>
    </location>
</feature>
<feature type="disulfide bond" evidence="2">
    <location>
        <begin position="11"/>
        <end position="40"/>
    </location>
</feature>
<feature type="disulfide bond" evidence="2">
    <location>
        <begin position="23"/>
        <end position="42"/>
    </location>
</feature>